<keyword id="KW-0067">ATP-binding</keyword>
<keyword id="KW-0963">Cytoplasm</keyword>
<keyword id="KW-0418">Kinase</keyword>
<keyword id="KW-0547">Nucleotide-binding</keyword>
<keyword id="KW-0808">Transferase</keyword>
<dbReference type="EC" id="2.7.1.48" evidence="1"/>
<dbReference type="EMBL" id="AE009949">
    <property type="protein sequence ID" value="AAL97975.1"/>
    <property type="molecule type" value="Genomic_DNA"/>
</dbReference>
<dbReference type="RefSeq" id="WP_011017929.1">
    <property type="nucleotide sequence ID" value="NC_003485.1"/>
</dbReference>
<dbReference type="SMR" id="Q8P0F8"/>
<dbReference type="KEGG" id="spm:spyM18_1380"/>
<dbReference type="HOGENOM" id="CLU_021278_1_2_9"/>
<dbReference type="UniPathway" id="UPA00574">
    <property type="reaction ID" value="UER00637"/>
</dbReference>
<dbReference type="UniPathway" id="UPA00579">
    <property type="reaction ID" value="UER00640"/>
</dbReference>
<dbReference type="GO" id="GO:0005737">
    <property type="term" value="C:cytoplasm"/>
    <property type="evidence" value="ECO:0007669"/>
    <property type="project" value="UniProtKB-SubCell"/>
</dbReference>
<dbReference type="GO" id="GO:0005524">
    <property type="term" value="F:ATP binding"/>
    <property type="evidence" value="ECO:0007669"/>
    <property type="project" value="UniProtKB-UniRule"/>
</dbReference>
<dbReference type="GO" id="GO:0043771">
    <property type="term" value="F:cytidine kinase activity"/>
    <property type="evidence" value="ECO:0007669"/>
    <property type="project" value="RHEA"/>
</dbReference>
<dbReference type="GO" id="GO:0004849">
    <property type="term" value="F:uridine kinase activity"/>
    <property type="evidence" value="ECO:0007669"/>
    <property type="project" value="UniProtKB-UniRule"/>
</dbReference>
<dbReference type="GO" id="GO:0044211">
    <property type="term" value="P:CTP salvage"/>
    <property type="evidence" value="ECO:0007669"/>
    <property type="project" value="UniProtKB-UniRule"/>
</dbReference>
<dbReference type="GO" id="GO:0044206">
    <property type="term" value="P:UMP salvage"/>
    <property type="evidence" value="ECO:0007669"/>
    <property type="project" value="UniProtKB-UniRule"/>
</dbReference>
<dbReference type="CDD" id="cd02023">
    <property type="entry name" value="UMPK"/>
    <property type="match status" value="1"/>
</dbReference>
<dbReference type="Gene3D" id="3.40.50.300">
    <property type="entry name" value="P-loop containing nucleotide triphosphate hydrolases"/>
    <property type="match status" value="1"/>
</dbReference>
<dbReference type="HAMAP" id="MF_00551">
    <property type="entry name" value="Uridine_kinase"/>
    <property type="match status" value="1"/>
</dbReference>
<dbReference type="InterPro" id="IPR027417">
    <property type="entry name" value="P-loop_NTPase"/>
</dbReference>
<dbReference type="InterPro" id="IPR006083">
    <property type="entry name" value="PRK/URK"/>
</dbReference>
<dbReference type="InterPro" id="IPR026008">
    <property type="entry name" value="Uridine_kinase"/>
</dbReference>
<dbReference type="InterPro" id="IPR000764">
    <property type="entry name" value="Uridine_kinase-like"/>
</dbReference>
<dbReference type="NCBIfam" id="NF004018">
    <property type="entry name" value="PRK05480.1"/>
    <property type="match status" value="1"/>
</dbReference>
<dbReference type="NCBIfam" id="TIGR00235">
    <property type="entry name" value="udk"/>
    <property type="match status" value="1"/>
</dbReference>
<dbReference type="PANTHER" id="PTHR10285">
    <property type="entry name" value="URIDINE KINASE"/>
    <property type="match status" value="1"/>
</dbReference>
<dbReference type="Pfam" id="PF00485">
    <property type="entry name" value="PRK"/>
    <property type="match status" value="1"/>
</dbReference>
<dbReference type="PRINTS" id="PR00988">
    <property type="entry name" value="URIDINKINASE"/>
</dbReference>
<dbReference type="SUPFAM" id="SSF52540">
    <property type="entry name" value="P-loop containing nucleoside triphosphate hydrolases"/>
    <property type="match status" value="1"/>
</dbReference>
<organism>
    <name type="scientific">Streptococcus pyogenes serotype M18 (strain MGAS8232)</name>
    <dbReference type="NCBI Taxonomy" id="186103"/>
    <lineage>
        <taxon>Bacteria</taxon>
        <taxon>Bacillati</taxon>
        <taxon>Bacillota</taxon>
        <taxon>Bacilli</taxon>
        <taxon>Lactobacillales</taxon>
        <taxon>Streptococcaceae</taxon>
        <taxon>Streptococcus</taxon>
    </lineage>
</organism>
<feature type="chain" id="PRO_0000164504" description="Uridine kinase">
    <location>
        <begin position="1"/>
        <end position="208"/>
    </location>
</feature>
<feature type="binding site" evidence="1">
    <location>
        <begin position="12"/>
        <end position="19"/>
    </location>
    <ligand>
        <name>ATP</name>
        <dbReference type="ChEBI" id="CHEBI:30616"/>
    </ligand>
</feature>
<proteinExistence type="inferred from homology"/>
<comment type="catalytic activity">
    <reaction evidence="1">
        <text>uridine + ATP = UMP + ADP + H(+)</text>
        <dbReference type="Rhea" id="RHEA:16825"/>
        <dbReference type="ChEBI" id="CHEBI:15378"/>
        <dbReference type="ChEBI" id="CHEBI:16704"/>
        <dbReference type="ChEBI" id="CHEBI:30616"/>
        <dbReference type="ChEBI" id="CHEBI:57865"/>
        <dbReference type="ChEBI" id="CHEBI:456216"/>
        <dbReference type="EC" id="2.7.1.48"/>
    </reaction>
</comment>
<comment type="catalytic activity">
    <reaction evidence="1">
        <text>cytidine + ATP = CMP + ADP + H(+)</text>
        <dbReference type="Rhea" id="RHEA:24674"/>
        <dbReference type="ChEBI" id="CHEBI:15378"/>
        <dbReference type="ChEBI" id="CHEBI:17562"/>
        <dbReference type="ChEBI" id="CHEBI:30616"/>
        <dbReference type="ChEBI" id="CHEBI:60377"/>
        <dbReference type="ChEBI" id="CHEBI:456216"/>
        <dbReference type="EC" id="2.7.1.48"/>
    </reaction>
</comment>
<comment type="pathway">
    <text evidence="1">Pyrimidine metabolism; CTP biosynthesis via salvage pathway; CTP from cytidine: step 1/3.</text>
</comment>
<comment type="pathway">
    <text evidence="1">Pyrimidine metabolism; UMP biosynthesis via salvage pathway; UMP from uridine: step 1/1.</text>
</comment>
<comment type="subcellular location">
    <subcellularLocation>
        <location evidence="1">Cytoplasm</location>
    </subcellularLocation>
</comment>
<comment type="similarity">
    <text evidence="1">Belongs to the uridine kinase family.</text>
</comment>
<reference key="1">
    <citation type="journal article" date="2002" name="Proc. Natl. Acad. Sci. U.S.A.">
        <title>Genome sequence and comparative microarray analysis of serotype M18 group A Streptococcus strains associated with acute rheumatic fever outbreaks.</title>
        <authorList>
            <person name="Smoot J.C."/>
            <person name="Barbian K.D."/>
            <person name="Van Gompel J.J."/>
            <person name="Smoot L.M."/>
            <person name="Chaussee M.S."/>
            <person name="Sylva G.L."/>
            <person name="Sturdevant D.E."/>
            <person name="Ricklefs S.M."/>
            <person name="Porcella S.F."/>
            <person name="Parkins L.D."/>
            <person name="Beres S.B."/>
            <person name="Campbell D.S."/>
            <person name="Smith T.M."/>
            <person name="Zhang Q."/>
            <person name="Kapur V."/>
            <person name="Daly J.A."/>
            <person name="Veasy L.G."/>
            <person name="Musser J.M."/>
        </authorList>
    </citation>
    <scope>NUCLEOTIDE SEQUENCE [LARGE SCALE GENOMIC DNA]</scope>
    <source>
        <strain>MGAS8232</strain>
    </source>
</reference>
<evidence type="ECO:0000255" key="1">
    <source>
        <dbReference type="HAMAP-Rule" id="MF_00551"/>
    </source>
</evidence>
<sequence length="208" mass="23850">MFKKPIIIGVTGGSGGGKTSVSRAILDSFPNARIAMIQHDSYYKDQSHMSFEERVKTNYDHPLAFDTDFMIQQLKELLAGRPVDIPIYDYKKHTRSNTTFRQDPQDVIIVEGILVLEDERLRDLMDIKLFVDTDDDIRIIRRIKRDMMERGRSLESIIDQYTSVVKPMYHQFIEPSKRYADIVIPEGVSNVVAIDVINSKIASILGEV</sequence>
<accession>Q8P0F8</accession>
<protein>
    <recommendedName>
        <fullName evidence="1">Uridine kinase</fullName>
        <ecNumber evidence="1">2.7.1.48</ecNumber>
    </recommendedName>
    <alternativeName>
        <fullName evidence="1">Cytidine monophosphokinase</fullName>
    </alternativeName>
    <alternativeName>
        <fullName evidence="1">Uridine monophosphokinase</fullName>
    </alternativeName>
</protein>
<name>URK_STRP8</name>
<gene>
    <name evidence="1" type="primary">udk</name>
    <name type="ordered locus">spyM18_1380</name>
</gene>